<sequence>MEGLTVGLFGHVEGVGKELGKKGTSTDITLYNYKQGDKAVCYVEPTRYPDRINPLIYEINMMDYALVFIDEITGELGETLLALDMFGINNGAFVVGEYVDLDMLKNIISQTSMKDFEILERDFINIREKMINLNIERDYNGFVKIPIDHYFTVRSVGTVILGKVESGTVRVHDNLRVYPTDKMAMVRSIQIHDNDFKEAKAGNRVGLALKGITTDELDRGMILSNGELKVAKEIEININWNPFMQKTVKEGENYQIIVGLQSVSCVVEEVNKNKIKLSLQKEIAYDVGDKLCLIDGSAKIRILGVGKL</sequence>
<dbReference type="EMBL" id="L77117">
    <property type="protein sequence ID" value="AAB98313.1"/>
    <property type="molecule type" value="Genomic_DNA"/>
</dbReference>
<dbReference type="PIR" id="E64340">
    <property type="entry name" value="E64340"/>
</dbReference>
<dbReference type="RefSeq" id="WP_010869822.1">
    <property type="nucleotide sequence ID" value="NC_000909.1"/>
</dbReference>
<dbReference type="SMR" id="Q57771"/>
<dbReference type="STRING" id="243232.MJ_0325"/>
<dbReference type="PaxDb" id="243232-MJ_0325"/>
<dbReference type="EnsemblBacteria" id="AAB98313">
    <property type="protein sequence ID" value="AAB98313"/>
    <property type="gene ID" value="MJ_0325"/>
</dbReference>
<dbReference type="GeneID" id="1451179"/>
<dbReference type="KEGG" id="mja:MJ_0325"/>
<dbReference type="eggNOG" id="arCOG01564">
    <property type="taxonomic scope" value="Archaea"/>
</dbReference>
<dbReference type="HOGENOM" id="CLU_077867_0_0_2"/>
<dbReference type="InParanoid" id="Q57771"/>
<dbReference type="OrthoDB" id="30874at2157"/>
<dbReference type="PhylomeDB" id="Q57771"/>
<dbReference type="Proteomes" id="UP000000805">
    <property type="component" value="Chromosome"/>
</dbReference>
<dbReference type="GO" id="GO:0005525">
    <property type="term" value="F:GTP binding"/>
    <property type="evidence" value="ECO:0007669"/>
    <property type="project" value="InterPro"/>
</dbReference>
<dbReference type="GO" id="GO:0003746">
    <property type="term" value="F:translation elongation factor activity"/>
    <property type="evidence" value="ECO:0000318"/>
    <property type="project" value="GO_Central"/>
</dbReference>
<dbReference type="GO" id="GO:0001514">
    <property type="term" value="P:selenocysteine incorporation"/>
    <property type="evidence" value="ECO:0000318"/>
    <property type="project" value="GO_Central"/>
</dbReference>
<dbReference type="CDD" id="cd03696">
    <property type="entry name" value="SelB_II"/>
    <property type="match status" value="1"/>
</dbReference>
<dbReference type="Gene3D" id="3.40.50.300">
    <property type="entry name" value="P-loop containing nucleotide triphosphate hydrolases"/>
    <property type="match status" value="1"/>
</dbReference>
<dbReference type="Gene3D" id="2.40.30.10">
    <property type="entry name" value="Translation factors"/>
    <property type="match status" value="1"/>
</dbReference>
<dbReference type="InterPro" id="IPR050055">
    <property type="entry name" value="EF-Tu_GTPase"/>
</dbReference>
<dbReference type="InterPro" id="IPR004161">
    <property type="entry name" value="EFTu-like_2"/>
</dbReference>
<dbReference type="InterPro" id="IPR027417">
    <property type="entry name" value="P-loop_NTPase"/>
</dbReference>
<dbReference type="InterPro" id="IPR009000">
    <property type="entry name" value="Transl_B-barrel_sf"/>
</dbReference>
<dbReference type="PANTHER" id="PTHR43721">
    <property type="entry name" value="ELONGATION FACTOR TU-RELATED"/>
    <property type="match status" value="1"/>
</dbReference>
<dbReference type="PANTHER" id="PTHR43721:SF11">
    <property type="entry name" value="SELENOCYSTEINE-SPECIFIC ELONGATION FACTOR"/>
    <property type="match status" value="1"/>
</dbReference>
<dbReference type="Pfam" id="PF03144">
    <property type="entry name" value="GTP_EFTU_D2"/>
    <property type="match status" value="1"/>
</dbReference>
<dbReference type="SUPFAM" id="SSF50447">
    <property type="entry name" value="Translation proteins"/>
    <property type="match status" value="1"/>
</dbReference>
<accession>Q57771</accession>
<gene>
    <name type="ordered locus">MJ0325</name>
</gene>
<name>Y325_METJA</name>
<keyword id="KW-1185">Reference proteome</keyword>
<proteinExistence type="predicted"/>
<organism>
    <name type="scientific">Methanocaldococcus jannaschii (strain ATCC 43067 / DSM 2661 / JAL-1 / JCM 10045 / NBRC 100440)</name>
    <name type="common">Methanococcus jannaschii</name>
    <dbReference type="NCBI Taxonomy" id="243232"/>
    <lineage>
        <taxon>Archaea</taxon>
        <taxon>Methanobacteriati</taxon>
        <taxon>Methanobacteriota</taxon>
        <taxon>Methanomada group</taxon>
        <taxon>Methanococci</taxon>
        <taxon>Methanococcales</taxon>
        <taxon>Methanocaldococcaceae</taxon>
        <taxon>Methanocaldococcus</taxon>
    </lineage>
</organism>
<feature type="chain" id="PRO_0000106794" description="Uncharacterized protein MJ0325">
    <location>
        <begin position="1"/>
        <end position="308"/>
    </location>
</feature>
<reference key="1">
    <citation type="journal article" date="1996" name="Science">
        <title>Complete genome sequence of the methanogenic archaeon, Methanococcus jannaschii.</title>
        <authorList>
            <person name="Bult C.J."/>
            <person name="White O."/>
            <person name="Olsen G.J."/>
            <person name="Zhou L."/>
            <person name="Fleischmann R.D."/>
            <person name="Sutton G.G."/>
            <person name="Blake J.A."/>
            <person name="FitzGerald L.M."/>
            <person name="Clayton R.A."/>
            <person name="Gocayne J.D."/>
            <person name="Kerlavage A.R."/>
            <person name="Dougherty B.A."/>
            <person name="Tomb J.-F."/>
            <person name="Adams M.D."/>
            <person name="Reich C.I."/>
            <person name="Overbeek R."/>
            <person name="Kirkness E.F."/>
            <person name="Weinstock K.G."/>
            <person name="Merrick J.M."/>
            <person name="Glodek A."/>
            <person name="Scott J.L."/>
            <person name="Geoghagen N.S.M."/>
            <person name="Weidman J.F."/>
            <person name="Fuhrmann J.L."/>
            <person name="Nguyen D."/>
            <person name="Utterback T.R."/>
            <person name="Kelley J.M."/>
            <person name="Peterson J.D."/>
            <person name="Sadow P.W."/>
            <person name="Hanna M.C."/>
            <person name="Cotton M.D."/>
            <person name="Roberts K.M."/>
            <person name="Hurst M.A."/>
            <person name="Kaine B.P."/>
            <person name="Borodovsky M."/>
            <person name="Klenk H.-P."/>
            <person name="Fraser C.M."/>
            <person name="Smith H.O."/>
            <person name="Woese C.R."/>
            <person name="Venter J.C."/>
        </authorList>
    </citation>
    <scope>NUCLEOTIDE SEQUENCE [LARGE SCALE GENOMIC DNA]</scope>
    <source>
        <strain>ATCC 43067 / DSM 2661 / JAL-1 / JCM 10045 / NBRC 100440</strain>
    </source>
</reference>
<protein>
    <recommendedName>
        <fullName>Uncharacterized protein MJ0325</fullName>
    </recommendedName>
</protein>